<gene>
    <name evidence="2" type="primary">rpsL</name>
    <name type="ordered locus">RALTA_A2955</name>
</gene>
<comment type="function">
    <text evidence="2">With S4 and S5 plays an important role in translational accuracy.</text>
</comment>
<comment type="function">
    <text evidence="2">Interacts with and stabilizes bases of the 16S rRNA that are involved in tRNA selection in the A site and with the mRNA backbone. Located at the interface of the 30S and 50S subunits, it traverses the body of the 30S subunit contacting proteins on the other side and probably holding the rRNA structure together. The combined cluster of proteins S8, S12 and S17 appears to hold together the shoulder and platform of the 30S subunit.</text>
</comment>
<comment type="subunit">
    <text evidence="2">Part of the 30S ribosomal subunit. Contacts proteins S8 and S17. May interact with IF1 in the 30S initiation complex.</text>
</comment>
<comment type="similarity">
    <text evidence="2">Belongs to the universal ribosomal protein uS12 family.</text>
</comment>
<name>RS12_CUPTR</name>
<evidence type="ECO:0000250" key="1"/>
<evidence type="ECO:0000255" key="2">
    <source>
        <dbReference type="HAMAP-Rule" id="MF_00403"/>
    </source>
</evidence>
<evidence type="ECO:0000305" key="3"/>
<proteinExistence type="inferred from homology"/>
<keyword id="KW-0488">Methylation</keyword>
<keyword id="KW-0687">Ribonucleoprotein</keyword>
<keyword id="KW-0689">Ribosomal protein</keyword>
<keyword id="KW-0694">RNA-binding</keyword>
<keyword id="KW-0699">rRNA-binding</keyword>
<keyword id="KW-0820">tRNA-binding</keyword>
<feature type="chain" id="PRO_1000194149" description="Small ribosomal subunit protein uS12">
    <location>
        <begin position="1"/>
        <end position="125"/>
    </location>
</feature>
<feature type="modified residue" description="3-methylthioaspartic acid" evidence="1">
    <location>
        <position position="89"/>
    </location>
</feature>
<sequence>MPTINQLVRKPRVSEVVKSKSPALENCPQRRGVCTRVYTTTPKKPNSALRKVAKVRLTNGFEVISYIGGEGHNLQEHSVVLIRGGRVKDLPGVRYHIVRGSLDLQGVKDRKQARSKYGAKRPKAA</sequence>
<organism>
    <name type="scientific">Cupriavidus taiwanensis (strain DSM 17343 / BCRC 17206 / CCUG 44338 / CIP 107171 / LMG 19424 / R1)</name>
    <name type="common">Ralstonia taiwanensis (strain LMG 19424)</name>
    <dbReference type="NCBI Taxonomy" id="977880"/>
    <lineage>
        <taxon>Bacteria</taxon>
        <taxon>Pseudomonadati</taxon>
        <taxon>Pseudomonadota</taxon>
        <taxon>Betaproteobacteria</taxon>
        <taxon>Burkholderiales</taxon>
        <taxon>Burkholderiaceae</taxon>
        <taxon>Cupriavidus</taxon>
    </lineage>
</organism>
<accession>B3R7T3</accession>
<dbReference type="EMBL" id="CU633749">
    <property type="protein sequence ID" value="CAQ70878.1"/>
    <property type="molecule type" value="Genomic_DNA"/>
</dbReference>
<dbReference type="RefSeq" id="WP_010810460.1">
    <property type="nucleotide sequence ID" value="NC_010528.1"/>
</dbReference>
<dbReference type="SMR" id="B3R7T3"/>
<dbReference type="GeneID" id="98344297"/>
<dbReference type="KEGG" id="cti:RALTA_A2955"/>
<dbReference type="eggNOG" id="COG0048">
    <property type="taxonomic scope" value="Bacteria"/>
</dbReference>
<dbReference type="HOGENOM" id="CLU_104295_1_2_4"/>
<dbReference type="BioCyc" id="CTAI977880:RALTA_RS14405-MONOMER"/>
<dbReference type="Proteomes" id="UP000001692">
    <property type="component" value="Chromosome 1"/>
</dbReference>
<dbReference type="GO" id="GO:0015935">
    <property type="term" value="C:small ribosomal subunit"/>
    <property type="evidence" value="ECO:0007669"/>
    <property type="project" value="InterPro"/>
</dbReference>
<dbReference type="GO" id="GO:0019843">
    <property type="term" value="F:rRNA binding"/>
    <property type="evidence" value="ECO:0007669"/>
    <property type="project" value="UniProtKB-UniRule"/>
</dbReference>
<dbReference type="GO" id="GO:0003735">
    <property type="term" value="F:structural constituent of ribosome"/>
    <property type="evidence" value="ECO:0007669"/>
    <property type="project" value="InterPro"/>
</dbReference>
<dbReference type="GO" id="GO:0000049">
    <property type="term" value="F:tRNA binding"/>
    <property type="evidence" value="ECO:0007669"/>
    <property type="project" value="UniProtKB-UniRule"/>
</dbReference>
<dbReference type="GO" id="GO:0006412">
    <property type="term" value="P:translation"/>
    <property type="evidence" value="ECO:0007669"/>
    <property type="project" value="UniProtKB-UniRule"/>
</dbReference>
<dbReference type="CDD" id="cd03368">
    <property type="entry name" value="Ribosomal_S12"/>
    <property type="match status" value="1"/>
</dbReference>
<dbReference type="FunFam" id="2.40.50.140:FF:000001">
    <property type="entry name" value="30S ribosomal protein S12"/>
    <property type="match status" value="1"/>
</dbReference>
<dbReference type="Gene3D" id="2.40.50.140">
    <property type="entry name" value="Nucleic acid-binding proteins"/>
    <property type="match status" value="1"/>
</dbReference>
<dbReference type="HAMAP" id="MF_00403_B">
    <property type="entry name" value="Ribosomal_uS12_B"/>
    <property type="match status" value="1"/>
</dbReference>
<dbReference type="InterPro" id="IPR012340">
    <property type="entry name" value="NA-bd_OB-fold"/>
</dbReference>
<dbReference type="InterPro" id="IPR006032">
    <property type="entry name" value="Ribosomal_uS12"/>
</dbReference>
<dbReference type="InterPro" id="IPR005679">
    <property type="entry name" value="Ribosomal_uS12_bac"/>
</dbReference>
<dbReference type="NCBIfam" id="TIGR00981">
    <property type="entry name" value="rpsL_bact"/>
    <property type="match status" value="1"/>
</dbReference>
<dbReference type="PANTHER" id="PTHR11652">
    <property type="entry name" value="30S RIBOSOMAL PROTEIN S12 FAMILY MEMBER"/>
    <property type="match status" value="1"/>
</dbReference>
<dbReference type="Pfam" id="PF00164">
    <property type="entry name" value="Ribosom_S12_S23"/>
    <property type="match status" value="1"/>
</dbReference>
<dbReference type="PIRSF" id="PIRSF002133">
    <property type="entry name" value="Ribosomal_S12/S23"/>
    <property type="match status" value="1"/>
</dbReference>
<dbReference type="PRINTS" id="PR01034">
    <property type="entry name" value="RIBOSOMALS12"/>
</dbReference>
<dbReference type="SUPFAM" id="SSF50249">
    <property type="entry name" value="Nucleic acid-binding proteins"/>
    <property type="match status" value="1"/>
</dbReference>
<dbReference type="PROSITE" id="PS00055">
    <property type="entry name" value="RIBOSOMAL_S12"/>
    <property type="match status" value="1"/>
</dbReference>
<reference key="1">
    <citation type="journal article" date="2008" name="Genome Res.">
        <title>Genome sequence of the beta-rhizobium Cupriavidus taiwanensis and comparative genomics of rhizobia.</title>
        <authorList>
            <person name="Amadou C."/>
            <person name="Pascal G."/>
            <person name="Mangenot S."/>
            <person name="Glew M."/>
            <person name="Bontemps C."/>
            <person name="Capela D."/>
            <person name="Carrere S."/>
            <person name="Cruveiller S."/>
            <person name="Dossat C."/>
            <person name="Lajus A."/>
            <person name="Marchetti M."/>
            <person name="Poinsot V."/>
            <person name="Rouy Z."/>
            <person name="Servin B."/>
            <person name="Saad M."/>
            <person name="Schenowitz C."/>
            <person name="Barbe V."/>
            <person name="Batut J."/>
            <person name="Medigue C."/>
            <person name="Masson-Boivin C."/>
        </authorList>
    </citation>
    <scope>NUCLEOTIDE SEQUENCE [LARGE SCALE GENOMIC DNA]</scope>
    <source>
        <strain>DSM 17343 / BCRC 17206 / CCUG 44338 / CIP 107171 / LMG 19424 / R1</strain>
    </source>
</reference>
<protein>
    <recommendedName>
        <fullName evidence="2">Small ribosomal subunit protein uS12</fullName>
    </recommendedName>
    <alternativeName>
        <fullName evidence="3">30S ribosomal protein S12</fullName>
    </alternativeName>
</protein>